<evidence type="ECO:0000250" key="1"/>
<evidence type="ECO:0000305" key="2"/>
<reference key="1">
    <citation type="journal article" date="2001" name="J. Bacteriol.">
        <title>Genome sequence and comparative analysis of the solvent-producing bacterium Clostridium acetobutylicum.</title>
        <authorList>
            <person name="Noelling J."/>
            <person name="Breton G."/>
            <person name="Omelchenko M.V."/>
            <person name="Makarova K.S."/>
            <person name="Zeng Q."/>
            <person name="Gibson R."/>
            <person name="Lee H.M."/>
            <person name="Dubois J."/>
            <person name="Qiu D."/>
            <person name="Hitti J."/>
            <person name="Wolf Y.I."/>
            <person name="Tatusov R.L."/>
            <person name="Sabathe F."/>
            <person name="Doucette-Stamm L.A."/>
            <person name="Soucaille P."/>
            <person name="Daly M.J."/>
            <person name="Bennett G.N."/>
            <person name="Koonin E.V."/>
            <person name="Smith D.R."/>
        </authorList>
    </citation>
    <scope>NUCLEOTIDE SEQUENCE [LARGE SCALE GENOMIC DNA]</scope>
    <source>
        <strain>ATCC 824 / DSM 792 / JCM 1419 / IAM 19013 / LMG 5710 / NBRC 13948 / NRRL B-527 / VKM B-1787 / 2291 / W</strain>
    </source>
</reference>
<accession>Q97EE1</accession>
<comment type="function">
    <text evidence="1">Catalyzes the isomerization between 2-isopropylmalate and 3-isopropylmalate, via the formation of 2-isopropylmaleate.</text>
</comment>
<comment type="catalytic activity">
    <reaction>
        <text>(2R,3S)-3-isopropylmalate = (2S)-2-isopropylmalate</text>
        <dbReference type="Rhea" id="RHEA:32287"/>
        <dbReference type="ChEBI" id="CHEBI:1178"/>
        <dbReference type="ChEBI" id="CHEBI:35121"/>
        <dbReference type="EC" id="4.2.1.33"/>
    </reaction>
</comment>
<comment type="pathway">
    <text>Amino-acid biosynthesis; L-leucine biosynthesis; L-leucine from 3-methyl-2-oxobutanoate: step 2/4.</text>
</comment>
<comment type="subunit">
    <text evidence="1">Heterodimer of LeuC and LeuD.</text>
</comment>
<comment type="similarity">
    <text evidence="2">Belongs to the LeuD family. LeuD type 2 subfamily.</text>
</comment>
<organism>
    <name type="scientific">Clostridium acetobutylicum (strain ATCC 824 / DSM 792 / JCM 1419 / IAM 19013 / LMG 5710 / NBRC 13948 / NRRL B-527 / VKM B-1787 / 2291 / W)</name>
    <dbReference type="NCBI Taxonomy" id="272562"/>
    <lineage>
        <taxon>Bacteria</taxon>
        <taxon>Bacillati</taxon>
        <taxon>Bacillota</taxon>
        <taxon>Clostridia</taxon>
        <taxon>Eubacteriales</taxon>
        <taxon>Clostridiaceae</taxon>
        <taxon>Clostridium</taxon>
    </lineage>
</organism>
<protein>
    <recommendedName>
        <fullName>3-isopropylmalate dehydratase small subunit</fullName>
        <ecNumber>4.2.1.33</ecNumber>
    </recommendedName>
    <alternativeName>
        <fullName>Alpha-IPM isomerase</fullName>
        <shortName>IPMI</shortName>
    </alternativeName>
    <alternativeName>
        <fullName>Isopropylmalate isomerase</fullName>
    </alternativeName>
</protein>
<proteinExistence type="inferred from homology"/>
<sequence length="163" mass="18025">MKVNGDVLKYGDNIDTDVIIPARYLNTSVPEELAKHCMEDLDVDFLKKLKTGDIVVGGRNFGCGSSREHAPICIKAAGVSCVIAKSFARIFYRNSINIGFPILECEEAVNDASTGDKLEVDFIEGIIKNVTLNKEYKAQPFPDFMLKIMKNEGLTNCVKKGLF</sequence>
<keyword id="KW-0028">Amino-acid biosynthesis</keyword>
<keyword id="KW-0100">Branched-chain amino acid biosynthesis</keyword>
<keyword id="KW-0432">Leucine biosynthesis</keyword>
<keyword id="KW-0456">Lyase</keyword>
<keyword id="KW-1185">Reference proteome</keyword>
<gene>
    <name type="primary">leuD</name>
    <name type="ordered locus">CA_C3172</name>
</gene>
<dbReference type="EC" id="4.2.1.33"/>
<dbReference type="EMBL" id="AE001437">
    <property type="protein sequence ID" value="AAK81109.1"/>
    <property type="molecule type" value="Genomic_DNA"/>
</dbReference>
<dbReference type="PIR" id="B97290">
    <property type="entry name" value="B97290"/>
</dbReference>
<dbReference type="RefSeq" id="NP_349769.1">
    <property type="nucleotide sequence ID" value="NC_003030.1"/>
</dbReference>
<dbReference type="RefSeq" id="WP_010966449.1">
    <property type="nucleotide sequence ID" value="NC_003030.1"/>
</dbReference>
<dbReference type="SMR" id="Q97EE1"/>
<dbReference type="STRING" id="272562.CA_C3172"/>
<dbReference type="GeneID" id="44999660"/>
<dbReference type="KEGG" id="cac:CA_C3172"/>
<dbReference type="PATRIC" id="fig|272562.8.peg.3353"/>
<dbReference type="eggNOG" id="COG0066">
    <property type="taxonomic scope" value="Bacteria"/>
</dbReference>
<dbReference type="HOGENOM" id="CLU_081378_1_1_9"/>
<dbReference type="OrthoDB" id="9777465at2"/>
<dbReference type="UniPathway" id="UPA00048">
    <property type="reaction ID" value="UER00071"/>
</dbReference>
<dbReference type="Proteomes" id="UP000000814">
    <property type="component" value="Chromosome"/>
</dbReference>
<dbReference type="GO" id="GO:0003861">
    <property type="term" value="F:3-isopropylmalate dehydratase activity"/>
    <property type="evidence" value="ECO:0007669"/>
    <property type="project" value="UniProtKB-UniRule"/>
</dbReference>
<dbReference type="GO" id="GO:0009098">
    <property type="term" value="P:L-leucine biosynthetic process"/>
    <property type="evidence" value="ECO:0007669"/>
    <property type="project" value="UniProtKB-UniRule"/>
</dbReference>
<dbReference type="CDD" id="cd01577">
    <property type="entry name" value="IPMI_Swivel"/>
    <property type="match status" value="1"/>
</dbReference>
<dbReference type="FunFam" id="3.20.19.10:FF:000007">
    <property type="entry name" value="Isopropylmalate/citramalate isomerase small subunit"/>
    <property type="match status" value="1"/>
</dbReference>
<dbReference type="Gene3D" id="3.20.19.10">
    <property type="entry name" value="Aconitase, domain 4"/>
    <property type="match status" value="1"/>
</dbReference>
<dbReference type="HAMAP" id="MF_01032">
    <property type="entry name" value="LeuD_type2"/>
    <property type="match status" value="1"/>
</dbReference>
<dbReference type="InterPro" id="IPR015928">
    <property type="entry name" value="Aconitase/3IPM_dehydase_swvl"/>
</dbReference>
<dbReference type="InterPro" id="IPR000573">
    <property type="entry name" value="AconitaseA/IPMdHydase_ssu_swvl"/>
</dbReference>
<dbReference type="InterPro" id="IPR033940">
    <property type="entry name" value="IPMI_Swivel"/>
</dbReference>
<dbReference type="InterPro" id="IPR050075">
    <property type="entry name" value="LeuD"/>
</dbReference>
<dbReference type="InterPro" id="IPR011824">
    <property type="entry name" value="LeuD/DmdB_bac"/>
</dbReference>
<dbReference type="InterPro" id="IPR011827">
    <property type="entry name" value="LeuD_type2/HacB/DmdB"/>
</dbReference>
<dbReference type="NCBIfam" id="TIGR02084">
    <property type="entry name" value="leud"/>
    <property type="match status" value="1"/>
</dbReference>
<dbReference type="NCBIfam" id="TIGR02087">
    <property type="entry name" value="LEUD_arch"/>
    <property type="match status" value="1"/>
</dbReference>
<dbReference type="PANTHER" id="PTHR43345:SF2">
    <property type="entry name" value="3-ISOPROPYLMALATE DEHYDRATASE SMALL SUBUNIT 1"/>
    <property type="match status" value="1"/>
</dbReference>
<dbReference type="PANTHER" id="PTHR43345">
    <property type="entry name" value="3-ISOPROPYLMALATE DEHYDRATASE SMALL SUBUNIT 2-RELATED-RELATED"/>
    <property type="match status" value="1"/>
</dbReference>
<dbReference type="Pfam" id="PF00694">
    <property type="entry name" value="Aconitase_C"/>
    <property type="match status" value="1"/>
</dbReference>
<dbReference type="SUPFAM" id="SSF52016">
    <property type="entry name" value="LeuD/IlvD-like"/>
    <property type="match status" value="1"/>
</dbReference>
<feature type="chain" id="PRO_0000141921" description="3-isopropylmalate dehydratase small subunit">
    <location>
        <begin position="1"/>
        <end position="163"/>
    </location>
</feature>
<name>LEUD_CLOAB</name>